<reference key="1">
    <citation type="journal article" date="2004" name="Proc. Natl. Acad. Sci. U.S.A.">
        <title>The diploid genome sequence of Candida albicans.</title>
        <authorList>
            <person name="Jones T."/>
            <person name="Federspiel N.A."/>
            <person name="Chibana H."/>
            <person name="Dungan J."/>
            <person name="Kalman S."/>
            <person name="Magee B.B."/>
            <person name="Newport G."/>
            <person name="Thorstenson Y.R."/>
            <person name="Agabian N."/>
            <person name="Magee P.T."/>
            <person name="Davis R.W."/>
            <person name="Scherer S."/>
        </authorList>
    </citation>
    <scope>NUCLEOTIDE SEQUENCE [LARGE SCALE GENOMIC DNA]</scope>
    <source>
        <strain>SC5314 / ATCC MYA-2876</strain>
    </source>
</reference>
<reference key="2">
    <citation type="journal article" date="2007" name="Genome Biol.">
        <title>Assembly of the Candida albicans genome into sixteen supercontigs aligned on the eight chromosomes.</title>
        <authorList>
            <person name="van het Hoog M."/>
            <person name="Rast T.J."/>
            <person name="Martchenko M."/>
            <person name="Grindle S."/>
            <person name="Dignard D."/>
            <person name="Hogues H."/>
            <person name="Cuomo C."/>
            <person name="Berriman M."/>
            <person name="Scherer S."/>
            <person name="Magee B.B."/>
            <person name="Whiteway M."/>
            <person name="Chibana H."/>
            <person name="Nantel A."/>
            <person name="Magee P.T."/>
        </authorList>
    </citation>
    <scope>GENOME REANNOTATION</scope>
    <source>
        <strain>SC5314 / ATCC MYA-2876</strain>
    </source>
</reference>
<reference key="3">
    <citation type="journal article" date="2013" name="Genome Biol.">
        <title>Assembly of a phased diploid Candida albicans genome facilitates allele-specific measurements and provides a simple model for repeat and indel structure.</title>
        <authorList>
            <person name="Muzzey D."/>
            <person name="Schwartz K."/>
            <person name="Weissman J.S."/>
            <person name="Sherlock G."/>
        </authorList>
    </citation>
    <scope>NUCLEOTIDE SEQUENCE [LARGE SCALE GENOMIC DNA]</scope>
    <scope>GENOME REANNOTATION</scope>
    <source>
        <strain>SC5314 / ATCC MYA-2876</strain>
    </source>
</reference>
<accession>Q59PT4</accession>
<accession>A0A1D8PT41</accession>
<evidence type="ECO:0000250" key="1"/>
<evidence type="ECO:0000255" key="2"/>
<evidence type="ECO:0000305" key="3"/>
<keyword id="KW-1185">Reference proteome</keyword>
<keyword id="KW-0732">Signal</keyword>
<name>LCL2_CANAL</name>
<organism>
    <name type="scientific">Candida albicans (strain SC5314 / ATCC MYA-2876)</name>
    <name type="common">Yeast</name>
    <dbReference type="NCBI Taxonomy" id="237561"/>
    <lineage>
        <taxon>Eukaryota</taxon>
        <taxon>Fungi</taxon>
        <taxon>Dikarya</taxon>
        <taxon>Ascomycota</taxon>
        <taxon>Saccharomycotina</taxon>
        <taxon>Pichiomycetes</taxon>
        <taxon>Debaryomycetaceae</taxon>
        <taxon>Candida/Lodderomyces clade</taxon>
        <taxon>Candida</taxon>
    </lineage>
</organism>
<protein>
    <recommendedName>
        <fullName>Long chronological lifespan protein 2</fullName>
    </recommendedName>
</protein>
<comment type="function">
    <text evidence="1">Probable component of the endoplasmic reticulum-associated degradation (ERAD) pathway.</text>
</comment>
<comment type="similarity">
    <text evidence="3">Belongs to the LCL2 family.</text>
</comment>
<feature type="signal peptide" evidence="2">
    <location>
        <begin position="1"/>
        <end position="17"/>
    </location>
</feature>
<feature type="chain" id="PRO_0000408598" description="Long chronological lifespan protein 2">
    <location>
        <begin position="18"/>
        <end position="134"/>
    </location>
</feature>
<proteinExistence type="inferred from homology"/>
<dbReference type="EMBL" id="CP017630">
    <property type="protein sequence ID" value="AOW31296.1"/>
    <property type="molecule type" value="Genomic_DNA"/>
</dbReference>
<dbReference type="RefSeq" id="XP_711696.1">
    <property type="nucleotide sequence ID" value="XM_706604.2"/>
</dbReference>
<dbReference type="SMR" id="Q59PT4"/>
<dbReference type="FunCoup" id="Q59PT4">
    <property type="interactions" value="19"/>
</dbReference>
<dbReference type="STRING" id="237561.Q59PT4"/>
<dbReference type="EnsemblFungi" id="CR_05800C_A-T">
    <property type="protein sequence ID" value="CR_05800C_A-T-p1"/>
    <property type="gene ID" value="CR_05800C_A"/>
</dbReference>
<dbReference type="GeneID" id="3646706"/>
<dbReference type="KEGG" id="cal:CAALFM_CR05800CA"/>
<dbReference type="CGD" id="CAL0000198788">
    <property type="gene designation" value="orf19.6630"/>
</dbReference>
<dbReference type="VEuPathDB" id="FungiDB:CR_05800C_A"/>
<dbReference type="eggNOG" id="ENOG502S416">
    <property type="taxonomic scope" value="Eukaryota"/>
</dbReference>
<dbReference type="HOGENOM" id="CLU_142363_1_0_1"/>
<dbReference type="InParanoid" id="Q59PT4"/>
<dbReference type="OMA" id="DNYLCPD"/>
<dbReference type="OrthoDB" id="2234316at2759"/>
<dbReference type="PRO" id="PR:Q59PT4"/>
<dbReference type="Proteomes" id="UP000000559">
    <property type="component" value="Chromosome R"/>
</dbReference>
<dbReference type="CDD" id="cd23996">
    <property type="entry name" value="LCL2-like"/>
    <property type="match status" value="1"/>
</dbReference>
<dbReference type="InterPro" id="IPR034543">
    <property type="entry name" value="LCL2"/>
</dbReference>
<dbReference type="PANTHER" id="PTHR38425">
    <property type="entry name" value="LONG CHRONOLOGICAL LIFESPAN PROTEIN 2"/>
    <property type="match status" value="1"/>
</dbReference>
<dbReference type="PANTHER" id="PTHR38425:SF1">
    <property type="entry name" value="LONG CHRONOLOGICAL LIFESPAN PROTEIN 2"/>
    <property type="match status" value="1"/>
</dbReference>
<sequence length="134" mass="15117">MFQKLIVITFAIALASANIFDFLNNFNTGGRQQQNQGVRTPQEYESVVLNSQCDKYLCPDTGLCVEAPKFCPCPYPSSQIRCFLPDGRFVCISKPAGEGISEKYNDPKTNWKIDAKDDNIRDCGWVNRAWRGLV</sequence>
<gene>
    <name type="primary">LCL2</name>
    <name type="ordered locus">CAALFM_CR05800CA</name>
    <name type="ORF">CaO19.13952</name>
    <name type="ORF">CaO19.6630</name>
</gene>